<name>TX621_POEME</name>
<evidence type="ECO:0000250" key="1">
    <source>
        <dbReference type="UniProtKB" id="P60992"/>
    </source>
</evidence>
<evidence type="ECO:0000269" key="2">
    <source>
    </source>
</evidence>
<evidence type="ECO:0000303" key="3">
    <source>
    </source>
</evidence>
<evidence type="ECO:0000305" key="4"/>
<evidence type="ECO:0000305" key="5">
    <source>
    </source>
</evidence>
<dbReference type="SMR" id="P0DQO0"/>
<dbReference type="GO" id="GO:0005576">
    <property type="term" value="C:extracellular region"/>
    <property type="evidence" value="ECO:0007669"/>
    <property type="project" value="UniProtKB-SubCell"/>
</dbReference>
<dbReference type="GO" id="GO:0008200">
    <property type="term" value="F:ion channel inhibitor activity"/>
    <property type="evidence" value="ECO:0007669"/>
    <property type="project" value="InterPro"/>
</dbReference>
<dbReference type="GO" id="GO:0017080">
    <property type="term" value="F:sodium channel regulator activity"/>
    <property type="evidence" value="ECO:0007669"/>
    <property type="project" value="UniProtKB-KW"/>
</dbReference>
<dbReference type="GO" id="GO:0090729">
    <property type="term" value="F:toxin activity"/>
    <property type="evidence" value="ECO:0007669"/>
    <property type="project" value="UniProtKB-KW"/>
</dbReference>
<dbReference type="InterPro" id="IPR011696">
    <property type="entry name" value="Huwentoxin-1"/>
</dbReference>
<dbReference type="Pfam" id="PF07740">
    <property type="entry name" value="Toxin_12"/>
    <property type="match status" value="1"/>
</dbReference>
<dbReference type="SUPFAM" id="SSF57059">
    <property type="entry name" value="omega toxin-like"/>
    <property type="match status" value="1"/>
</dbReference>
<keyword id="KW-0027">Amidation</keyword>
<keyword id="KW-0903">Direct protein sequencing</keyword>
<keyword id="KW-1015">Disulfide bond</keyword>
<keyword id="KW-0872">Ion channel impairing toxin</keyword>
<keyword id="KW-0960">Knottin</keyword>
<keyword id="KW-0528">Neurotoxin</keyword>
<keyword id="KW-0964">Secreted</keyword>
<keyword id="KW-0800">Toxin</keyword>
<keyword id="KW-0738">Voltage-gated sodium channel impairing toxin</keyword>
<protein>
    <recommendedName>
        <fullName evidence="3">Mu-theraphotoxin-Pm1a</fullName>
        <shortName evidence="3">Mu-TRTX-Pm1a</shortName>
    </recommendedName>
</protein>
<reference key="1">
    <citation type="journal article" date="2020" name="Biomedicines">
        <title>Addition of K22 converts spider venom peptide Pme2a from an activator to an inhibitor of Nav1.7.</title>
        <authorList>
            <person name="Yin K."/>
            <person name="Deuis J.R."/>
            <person name="Dekan Z."/>
            <person name="Jin A.H."/>
            <person name="Alewood P.F."/>
            <person name="King G.F."/>
            <person name="Herzig V."/>
            <person name="Vetter I."/>
        </authorList>
    </citation>
    <scope>PROTEIN SEQUENCE</scope>
    <scope>FUNCTION</scope>
    <scope>MASS SPECTROMETRY</scope>
    <scope>AMIDATION AT PHE-35</scope>
    <scope>SUBCELLULAR LOCATION</scope>
    <source>
        <tissue>Venom</tissue>
    </source>
</reference>
<sequence length="35" mass="3920">GGCRYFLGGCSEHSDCCEHLRCKMGLNYCAWDGTF</sequence>
<organism>
    <name type="scientific">Poecilotheria metallica</name>
    <name type="common">Metallic blue ornamental tree spider</name>
    <dbReference type="NCBI Taxonomy" id="1956341"/>
    <lineage>
        <taxon>Eukaryota</taxon>
        <taxon>Metazoa</taxon>
        <taxon>Ecdysozoa</taxon>
        <taxon>Arthropoda</taxon>
        <taxon>Chelicerata</taxon>
        <taxon>Arachnida</taxon>
        <taxon>Araneae</taxon>
        <taxon>Mygalomorphae</taxon>
        <taxon>Theraphosidae</taxon>
        <taxon>Poecilotheria</taxon>
    </lineage>
</organism>
<proteinExistence type="evidence at protein level"/>
<feature type="chain" id="PRO_0000451632" description="Mu-theraphotoxin-Pm1a" evidence="2">
    <location>
        <begin position="1"/>
        <end position="35"/>
    </location>
</feature>
<feature type="modified residue" description="Phenylalanine amide" evidence="2">
    <location>
        <position position="35"/>
    </location>
</feature>
<feature type="disulfide bond" evidence="1">
    <location>
        <begin position="3"/>
        <end position="17"/>
    </location>
</feature>
<feature type="disulfide bond" evidence="1">
    <location>
        <begin position="10"/>
        <end position="22"/>
    </location>
</feature>
<feature type="disulfide bond" evidence="1">
    <location>
        <begin position="16"/>
        <end position="29"/>
    </location>
</feature>
<comment type="function">
    <text evidence="2">Gating-modifier toxin with weak activity on Nav1.7/SCN9A and Nav1.8/SCN10A (PubMed:32092883). Inhibits Nav1.7/SCN9A peak current (IC(50)=334 nM) and shifts the voltage dependence of activation to more depolarised membrane potentials (PubMed:32092883). Shows 21% peak current inhibition (at 10 uM) on Nav1.8/SCN10A sodium channels (PubMed:32092883).</text>
</comment>
<comment type="subcellular location">
    <subcellularLocation>
        <location evidence="2">Secreted</location>
    </subcellularLocation>
</comment>
<comment type="tissue specificity">
    <text evidence="5">Expressed by the venom gland.</text>
</comment>
<comment type="domain">
    <text evidence="1">The presence of a 'disulfide through disulfide knot' structurally defines this protein as a knottin.</text>
</comment>
<comment type="mass spectrometry" mass="3910.6" method="MALDI" evidence="2"/>
<comment type="miscellaneous">
    <text evidence="2">Negative results: does not show activity on TRPV1.</text>
</comment>
<comment type="similarity">
    <text evidence="4">Belongs to the neurotoxin 10 (Hwtx-1) family. 62 (Vatx) subfamily.</text>
</comment>
<accession>P0DQO0</accession>